<accession>D3JV03</accession>
<proteinExistence type="evidence at protein level"/>
<keyword id="KW-0274">FAD</keyword>
<keyword id="KW-0285">Flavoprotein</keyword>
<keyword id="KW-0560">Oxidoreductase</keyword>
<reference key="1">
    <citation type="journal article" date="2009" name="Mol. Microbiol.">
        <title>(2S)-Methylsuccinyl-CoA dehydrogenase closes the ethylmalonyl-CoA pathway for acetyl-CoA assimilation.</title>
        <authorList>
            <person name="Erb T.J."/>
            <person name="Fuchs G."/>
            <person name="Alber B.E."/>
        </authorList>
    </citation>
    <scope>NUCLEOTIDE SEQUENCE [GENOMIC DNA]</scope>
    <scope>FUNCTION</scope>
    <scope>CATALYTIC ACTIVITY</scope>
    <scope>BIOPHYSICOCHEMICAL PROPERTIES</scope>
    <scope>DISRUPTION PHENOTYPE</scope>
    <scope>COFACTOR</scope>
    <scope>SUBUNIT</scope>
    <scope>SUBSTRATE SPECIFICITY</scope>
    <source>
        <strain>2.4.1</strain>
    </source>
</reference>
<feature type="chain" id="PRO_0000435827" description="(2S)-methylsuccinyl-CoA dehydrogenase">
    <location>
        <begin position="1"/>
        <end position="548"/>
    </location>
</feature>
<feature type="active site" description="Proton acceptor" evidence="1">
    <location>
        <position position="532"/>
    </location>
</feature>
<feature type="binding site" evidence="1">
    <location>
        <begin position="282"/>
        <end position="291"/>
    </location>
    <ligand>
        <name>FAD</name>
        <dbReference type="ChEBI" id="CHEBI:57692"/>
    </ligand>
</feature>
<feature type="binding site" evidence="1">
    <location>
        <position position="291"/>
    </location>
    <ligand>
        <name>substrate</name>
    </ligand>
</feature>
<feature type="binding site" evidence="1">
    <location>
        <begin position="315"/>
        <end position="317"/>
    </location>
    <ligand>
        <name>FAD</name>
        <dbReference type="ChEBI" id="CHEBI:57692"/>
    </ligand>
</feature>
<feature type="binding site" evidence="1">
    <location>
        <begin position="409"/>
        <end position="412"/>
    </location>
    <ligand>
        <name>substrate</name>
    </ligand>
</feature>
<feature type="binding site" evidence="1">
    <location>
        <position position="437"/>
    </location>
    <ligand>
        <name>FAD</name>
        <dbReference type="ChEBI" id="CHEBI:57692"/>
    </ligand>
</feature>
<feature type="binding site" evidence="1">
    <location>
        <begin position="505"/>
        <end position="509"/>
    </location>
    <ligand>
        <name>FAD</name>
        <dbReference type="ChEBI" id="CHEBI:57692"/>
    </ligand>
</feature>
<feature type="binding site" evidence="1">
    <location>
        <begin position="534"/>
        <end position="536"/>
    </location>
    <ligand>
        <name>FAD</name>
        <dbReference type="ChEBI" id="CHEBI:57692"/>
    </ligand>
</feature>
<comment type="function">
    <text evidence="2">Involved in the ethylmalonyl-CoA pathway, a new acetyl-CoA assimilation strategy that operates in a number of bacteria and replaces the glyoxylate cycle. Catalyzes the oxidation of (2S)-methylsuccinyl-CoA to yield mesaconyl-(C1)-CoA. Highly specific for (S)-methylsuccinyl-CoA.</text>
</comment>
<comment type="catalytic activity">
    <reaction evidence="2">
        <text>(2S)-methylsuccinyl-CoA + oxidized [electron-transfer flavoprotein] + H(+) = 2-methylfumaryl-CoA + reduced [electron-transfer flavoprotein]</text>
        <dbReference type="Rhea" id="RHEA:45028"/>
        <dbReference type="Rhea" id="RHEA-COMP:10685"/>
        <dbReference type="Rhea" id="RHEA-COMP:10686"/>
        <dbReference type="ChEBI" id="CHEBI:15378"/>
        <dbReference type="ChEBI" id="CHEBI:57692"/>
        <dbReference type="ChEBI" id="CHEBI:58307"/>
        <dbReference type="ChEBI" id="CHEBI:75635"/>
        <dbReference type="ChEBI" id="CHEBI:84866"/>
        <dbReference type="EC" id="1.3.8.12"/>
    </reaction>
</comment>
<comment type="cofactor">
    <cofactor evidence="2">
        <name>FAD</name>
        <dbReference type="ChEBI" id="CHEBI:57692"/>
    </cofactor>
    <text evidence="2">Binds 1 FAD per subunit.</text>
</comment>
<comment type="biophysicochemical properties">
    <kinetics>
        <KM evidence="2">20 uM for (2S)-methylsuccinyl-CoA</KM>
        <Vmax evidence="2">6.0 umol/min/mg enzyme</Vmax>
    </kinetics>
    <phDependence>
        <text evidence="2">Optimum pH is 9.2.</text>
    </phDependence>
</comment>
<comment type="subunit">
    <text evidence="2">Homodimer.</text>
</comment>
<comment type="disruption phenotype">
    <text evidence="2">Cells lacking this gene are unable to utilize acetate or acetoacetate as sole carbon source, but grow on succinate or propionate plus bicarbonate.</text>
</comment>
<comment type="similarity">
    <text evidence="4">Belongs to the acyl-CoA dehydrogenase family.</text>
</comment>
<evidence type="ECO:0000250" key="1">
    <source>
        <dbReference type="UniProtKB" id="P15651"/>
    </source>
</evidence>
<evidence type="ECO:0000269" key="2">
    <source>
    </source>
</evidence>
<evidence type="ECO:0000303" key="3">
    <source>
    </source>
</evidence>
<evidence type="ECO:0000305" key="4"/>
<protein>
    <recommendedName>
        <fullName evidence="3">(2S)-methylsuccinyl-CoA dehydrogenase</fullName>
        <shortName evidence="3">MCD</shortName>
        <ecNumber evidence="2">1.3.8.12</ecNumber>
    </recommendedName>
</protein>
<gene>
    <name evidence="3" type="primary">mcd</name>
</gene>
<dbReference type="EC" id="1.3.8.12" evidence="2"/>
<dbReference type="EMBL" id="GU320611">
    <property type="protein sequence ID" value="ADC44452.1"/>
    <property type="molecule type" value="Genomic_DNA"/>
</dbReference>
<dbReference type="SMR" id="D3JV03"/>
<dbReference type="BioCyc" id="MetaCyc:MONOMER-19169"/>
<dbReference type="BRENDA" id="1.3.8.12">
    <property type="organism ID" value="5383"/>
</dbReference>
<dbReference type="GO" id="GO:0003995">
    <property type="term" value="F:acyl-CoA dehydrogenase activity"/>
    <property type="evidence" value="ECO:0007669"/>
    <property type="project" value="InterPro"/>
</dbReference>
<dbReference type="GO" id="GO:0071949">
    <property type="term" value="F:FAD binding"/>
    <property type="evidence" value="ECO:0000314"/>
    <property type="project" value="UniProtKB"/>
</dbReference>
<dbReference type="GO" id="GO:0050660">
    <property type="term" value="F:flavin adenine dinucleotide binding"/>
    <property type="evidence" value="ECO:0000314"/>
    <property type="project" value="UniProtKB"/>
</dbReference>
<dbReference type="GO" id="GO:0052890">
    <property type="term" value="F:oxidoreductase activity, acting on the CH-CH group of donors, with a flavin as acceptor"/>
    <property type="evidence" value="ECO:0000314"/>
    <property type="project" value="UniProtKB"/>
</dbReference>
<dbReference type="FunFam" id="1.20.140.10:FF:000001">
    <property type="entry name" value="Acyl-CoA dehydrogenase"/>
    <property type="match status" value="1"/>
</dbReference>
<dbReference type="FunFam" id="2.40.110.10:FF:000015">
    <property type="entry name" value="Acyl-CoA dehydrogenase"/>
    <property type="match status" value="1"/>
</dbReference>
<dbReference type="Gene3D" id="1.10.540.10">
    <property type="entry name" value="Acyl-CoA dehydrogenase/oxidase, N-terminal domain"/>
    <property type="match status" value="1"/>
</dbReference>
<dbReference type="Gene3D" id="2.40.110.10">
    <property type="entry name" value="Butyryl-CoA Dehydrogenase, subunit A, domain 2"/>
    <property type="match status" value="1"/>
</dbReference>
<dbReference type="Gene3D" id="1.20.140.10">
    <property type="entry name" value="Butyryl-CoA Dehydrogenase, subunit A, domain 3"/>
    <property type="match status" value="1"/>
</dbReference>
<dbReference type="InterPro" id="IPR006089">
    <property type="entry name" value="Acyl-CoA_DH_CS"/>
</dbReference>
<dbReference type="InterPro" id="IPR006091">
    <property type="entry name" value="Acyl-CoA_Oxase/DH_mid-dom"/>
</dbReference>
<dbReference type="InterPro" id="IPR046373">
    <property type="entry name" value="Acyl-CoA_Oxase/DH_mid-dom_sf"/>
</dbReference>
<dbReference type="InterPro" id="IPR036250">
    <property type="entry name" value="AcylCo_DH-like_C"/>
</dbReference>
<dbReference type="InterPro" id="IPR009075">
    <property type="entry name" value="AcylCo_DH/oxidase_C"/>
</dbReference>
<dbReference type="InterPro" id="IPR013786">
    <property type="entry name" value="AcylCoA_DH/ox_N"/>
</dbReference>
<dbReference type="InterPro" id="IPR037069">
    <property type="entry name" value="AcylCoA_DH/ox_N_sf"/>
</dbReference>
<dbReference type="InterPro" id="IPR009100">
    <property type="entry name" value="AcylCoA_DH/oxidase_NM_dom_sf"/>
</dbReference>
<dbReference type="PANTHER" id="PTHR43884">
    <property type="entry name" value="ACYL-COA DEHYDROGENASE"/>
    <property type="match status" value="1"/>
</dbReference>
<dbReference type="PANTHER" id="PTHR43884:SF25">
    <property type="entry name" value="ACYL-COA DEHYDROGENASE YDBM-RELATED"/>
    <property type="match status" value="1"/>
</dbReference>
<dbReference type="Pfam" id="PF00441">
    <property type="entry name" value="Acyl-CoA_dh_1"/>
    <property type="match status" value="1"/>
</dbReference>
<dbReference type="Pfam" id="PF02770">
    <property type="entry name" value="Acyl-CoA_dh_M"/>
    <property type="match status" value="1"/>
</dbReference>
<dbReference type="Pfam" id="PF02771">
    <property type="entry name" value="Acyl-CoA_dh_N"/>
    <property type="match status" value="1"/>
</dbReference>
<dbReference type="SUPFAM" id="SSF47203">
    <property type="entry name" value="Acyl-CoA dehydrogenase C-terminal domain-like"/>
    <property type="match status" value="1"/>
</dbReference>
<dbReference type="SUPFAM" id="SSF56645">
    <property type="entry name" value="Acyl-CoA dehydrogenase NM domain-like"/>
    <property type="match status" value="1"/>
</dbReference>
<dbReference type="PROSITE" id="PS00073">
    <property type="entry name" value="ACYL_COA_DH_2"/>
    <property type="match status" value="1"/>
</dbReference>
<name>MCD_CERSP</name>
<sequence length="548" mass="59772">MTGQPLLGDLLTLASDALPEVEALFETARSALKERVTTDGKVSSKALEEEQFAAHALSWLATYVESLRQMRAWAGRLETEGRFGEMEALILQIAFGEYLAQIRGGIPMSQTETARVQDIGIELGHPGEAVRRLIQAGNTPAARARLVALMRDNHGRATFGASGLDEELEMIRDQFRRFADERVAPHAHGWHMRDELIPMEIVEALAEMGVFGLTIPEEFGGFGLSKASMVVVSEELSRGYIGVGSLGTRSEIAAELILCGGTDAQKAAWLPKLASGEILPTAVFTEPNTGSDLGSLRTRAVKDGDEWVVHGNKTWITHAARTHVMTLLARTDLETTDYRGLSMFLAEKVPGTDADPFPTPGMTGGEIEVLGYRGMKEYEIGFDGFRVKAENLLGGVEGQGFKQLMQTFESARIQTAARAIGVAQNALEVGMQYAEERKQFGKALIEFPRVAGKLAMMAVEIMVARQLTYHSAWEKDHGQRCDLEAGMAKLLGARVAWAAADNALQIHGGNGFALEYQISRILCDARILNIFEGAAEIQAQVIARRLLD</sequence>
<organism>
    <name type="scientific">Cereibacter sphaeroides</name>
    <name type="common">Rhodobacter sphaeroides</name>
    <dbReference type="NCBI Taxonomy" id="1063"/>
    <lineage>
        <taxon>Bacteria</taxon>
        <taxon>Pseudomonadati</taxon>
        <taxon>Pseudomonadota</taxon>
        <taxon>Alphaproteobacteria</taxon>
        <taxon>Rhodobacterales</taxon>
        <taxon>Paracoccaceae</taxon>
        <taxon>Cereibacter</taxon>
    </lineage>
</organism>